<proteinExistence type="evidence at protein level"/>
<feature type="initiator methionine" description="Removed" evidence="1">
    <location>
        <position position="1"/>
    </location>
</feature>
<feature type="chain" id="PRO_0000424992" description="Profilin-2">
    <location>
        <begin position="2"/>
        <end position="134"/>
    </location>
</feature>
<feature type="short sequence motif" description="Involved in PIP2 interaction">
    <location>
        <begin position="84"/>
        <end position="100"/>
    </location>
</feature>
<feature type="modified residue" description="Phosphothreonine" evidence="1">
    <location>
        <position position="114"/>
    </location>
</feature>
<feature type="disulfide bond" evidence="3">
    <location>
        <begin position="13"/>
        <end position="118"/>
    </location>
</feature>
<organism>
    <name type="scientific">Olea europaea</name>
    <name type="common">Common olive</name>
    <dbReference type="NCBI Taxonomy" id="4146"/>
    <lineage>
        <taxon>Eukaryota</taxon>
        <taxon>Viridiplantae</taxon>
        <taxon>Streptophyta</taxon>
        <taxon>Embryophyta</taxon>
        <taxon>Tracheophyta</taxon>
        <taxon>Spermatophyta</taxon>
        <taxon>Magnoliopsida</taxon>
        <taxon>eudicotyledons</taxon>
        <taxon>Gunneridae</taxon>
        <taxon>Pentapetalae</taxon>
        <taxon>asterids</taxon>
        <taxon>lamiids</taxon>
        <taxon>Lamiales</taxon>
        <taxon>Oleaceae</taxon>
        <taxon>Oleeae</taxon>
        <taxon>Olea</taxon>
    </lineage>
</organism>
<dbReference type="EMBL" id="DQ117908">
    <property type="protein sequence ID" value="AAZ30398.1"/>
    <property type="molecule type" value="mRNA"/>
</dbReference>
<dbReference type="SMR" id="A4GD56"/>
<dbReference type="Allergome" id="490">
    <property type="allergen name" value="Ole e 2"/>
</dbReference>
<dbReference type="GO" id="GO:0005938">
    <property type="term" value="C:cell cortex"/>
    <property type="evidence" value="ECO:0007669"/>
    <property type="project" value="TreeGrafter"/>
</dbReference>
<dbReference type="GO" id="GO:0005856">
    <property type="term" value="C:cytoskeleton"/>
    <property type="evidence" value="ECO:0007669"/>
    <property type="project" value="UniProtKB-SubCell"/>
</dbReference>
<dbReference type="GO" id="GO:0003785">
    <property type="term" value="F:actin monomer binding"/>
    <property type="evidence" value="ECO:0007669"/>
    <property type="project" value="TreeGrafter"/>
</dbReference>
<dbReference type="CDD" id="cd00148">
    <property type="entry name" value="PROF"/>
    <property type="match status" value="1"/>
</dbReference>
<dbReference type="FunFam" id="3.30.450.30:FF:000001">
    <property type="entry name" value="Profilin"/>
    <property type="match status" value="1"/>
</dbReference>
<dbReference type="Gene3D" id="3.30.450.30">
    <property type="entry name" value="Dynein light chain 2a, cytoplasmic"/>
    <property type="match status" value="1"/>
</dbReference>
<dbReference type="InterPro" id="IPR048278">
    <property type="entry name" value="PFN"/>
</dbReference>
<dbReference type="InterPro" id="IPR005455">
    <property type="entry name" value="PFN_euk"/>
</dbReference>
<dbReference type="InterPro" id="IPR036140">
    <property type="entry name" value="PFN_sf"/>
</dbReference>
<dbReference type="InterPro" id="IPR027310">
    <property type="entry name" value="Profilin_CS"/>
</dbReference>
<dbReference type="PANTHER" id="PTHR11604">
    <property type="entry name" value="PROFILIN"/>
    <property type="match status" value="1"/>
</dbReference>
<dbReference type="PANTHER" id="PTHR11604:SF25">
    <property type="entry name" value="PROFILIN-5"/>
    <property type="match status" value="1"/>
</dbReference>
<dbReference type="Pfam" id="PF00235">
    <property type="entry name" value="Profilin"/>
    <property type="match status" value="1"/>
</dbReference>
<dbReference type="PRINTS" id="PR00392">
    <property type="entry name" value="PROFILIN"/>
</dbReference>
<dbReference type="PRINTS" id="PR01640">
    <property type="entry name" value="PROFILINPLNT"/>
</dbReference>
<dbReference type="SMART" id="SM00392">
    <property type="entry name" value="PROF"/>
    <property type="match status" value="1"/>
</dbReference>
<dbReference type="SUPFAM" id="SSF55770">
    <property type="entry name" value="Profilin (actin-binding protein)"/>
    <property type="match status" value="1"/>
</dbReference>
<dbReference type="PROSITE" id="PS00414">
    <property type="entry name" value="PROFILIN"/>
    <property type="match status" value="1"/>
</dbReference>
<protein>
    <recommendedName>
        <fullName>Profilin-2</fullName>
    </recommendedName>
    <alternativeName>
        <fullName>Pollen allergen Ole e 2</fullName>
    </alternativeName>
    <allergenName>Ole e 2</allergenName>
</protein>
<keyword id="KW-0009">Actin-binding</keyword>
<keyword id="KW-0020">Allergen</keyword>
<keyword id="KW-0963">Cytoplasm</keyword>
<keyword id="KW-0206">Cytoskeleton</keyword>
<keyword id="KW-1015">Disulfide bond</keyword>
<keyword id="KW-0597">Phosphoprotein</keyword>
<sequence>MSWQAYVDDHLMCDIEGHEGHRLTAAAIVGQDGSVWAQSATFPQFKPEEMNGIMTDFNEPGHLAPTGLHLGGTKYMVIQGEAGAVIRGKKGSGGITIKKTGQALVFGIYEEPVTPGQCNMVVERLGDYLIEQGL</sequence>
<name>PROAA_OLEEU</name>
<reference key="1">
    <citation type="journal article" date="2012" name="PLoS ONE">
        <title>Characterization of profilin polymorphism in pollen with a focus on multifunctionality.</title>
        <authorList>
            <person name="Jimenez-Lopez J.C."/>
            <person name="Morales S."/>
            <person name="Castro A.J."/>
            <person name="Volkmann D."/>
            <person name="Rodriguez-Garcia M.I."/>
            <person name="Alche Jde D."/>
        </authorList>
    </citation>
    <scope>NUCLEOTIDE SEQUENCE [MRNA]</scope>
    <scope>POLYMORPHISM</scope>
    <source>
        <strain>cv. Picudo</strain>
    </source>
</reference>
<reference key="2">
    <citation type="journal article" date="2013" name="PLoS ONE">
        <title>Analysis of the effects of polymorphism on pollen profilin structural functionality and the generation of conformational, T- and B-cell epitopes.</title>
        <authorList>
            <person name="Jimenez-Lopez J.C."/>
            <person name="Rodriguez-Garcia M.I."/>
            <person name="Alche J.D."/>
        </authorList>
    </citation>
    <scope>3D-STRUCTURE MODELING</scope>
    <scope>DISULFIDE BOND</scope>
</reference>
<evidence type="ECO:0000250" key="1"/>
<evidence type="ECO:0000305" key="2"/>
<evidence type="ECO:0000305" key="3">
    <source>
    </source>
</evidence>
<comment type="function">
    <text evidence="1">Binds to actin and affects the structure of the cytoskeleton. At high concentrations, profilin prevents the polymerization of actin, whereas it enhances it at low concentrations (By similarity).</text>
</comment>
<comment type="subunit">
    <text evidence="1">Occurs in many kinds of cells as a complex with monomeric actin in a 1:1 ratio.</text>
</comment>
<comment type="subcellular location">
    <subcellularLocation>
        <location evidence="1">Cytoplasm</location>
        <location evidence="1">Cytoskeleton</location>
    </subcellularLocation>
</comment>
<comment type="PTM">
    <text evidence="1">Phosphorylated by MAP kinases.</text>
</comment>
<comment type="polymorphism">
    <text>Several isoforms of the allergen exist due to polymorphism.</text>
</comment>
<comment type="allergen">
    <text>Causes an allergic reaction in human.</text>
</comment>
<comment type="miscellaneous">
    <text evidence="3">The variability of the residues taking part of IgE-binding epitopes might be responsible of the difference in cross-reactivity among olive pollen cultivars, and between distantly related pollen species, leading to a variable range of allergy reactions among atopic patients.</text>
</comment>
<comment type="similarity">
    <text evidence="2">Belongs to the profilin family.</text>
</comment>
<accession>A4GD56</accession>